<reference key="1">
    <citation type="submission" date="2008-06" db="EMBL/GenBank/DDBJ databases">
        <title>Complete sequence of Stenotrophomonas maltophilia R551-3.</title>
        <authorList>
            <consortium name="US DOE Joint Genome Institute"/>
            <person name="Lucas S."/>
            <person name="Copeland A."/>
            <person name="Lapidus A."/>
            <person name="Glavina del Rio T."/>
            <person name="Dalin E."/>
            <person name="Tice H."/>
            <person name="Pitluck S."/>
            <person name="Chain P."/>
            <person name="Malfatti S."/>
            <person name="Shin M."/>
            <person name="Vergez L."/>
            <person name="Lang D."/>
            <person name="Schmutz J."/>
            <person name="Larimer F."/>
            <person name="Land M."/>
            <person name="Hauser L."/>
            <person name="Kyrpides N."/>
            <person name="Mikhailova N."/>
            <person name="Taghavi S."/>
            <person name="Monchy S."/>
            <person name="Newman L."/>
            <person name="Vangronsveld J."/>
            <person name="van der Lelie D."/>
            <person name="Richardson P."/>
        </authorList>
    </citation>
    <scope>NUCLEOTIDE SEQUENCE [LARGE SCALE GENOMIC DNA]</scope>
    <source>
        <strain>R551-3</strain>
    </source>
</reference>
<protein>
    <recommendedName>
        <fullName evidence="1">tRNA-specific 2-thiouridylase MnmA</fullName>
        <ecNumber evidence="1">2.8.1.13</ecNumber>
    </recommendedName>
</protein>
<dbReference type="EC" id="2.8.1.13" evidence="1"/>
<dbReference type="EMBL" id="CP001111">
    <property type="protein sequence ID" value="ACF51623.1"/>
    <property type="molecule type" value="Genomic_DNA"/>
</dbReference>
<dbReference type="RefSeq" id="WP_012510995.1">
    <property type="nucleotide sequence ID" value="NC_011071.1"/>
</dbReference>
<dbReference type="SMR" id="B4SIN4"/>
<dbReference type="STRING" id="391008.Smal_1919"/>
<dbReference type="KEGG" id="smt:Smal_1919"/>
<dbReference type="eggNOG" id="COG0482">
    <property type="taxonomic scope" value="Bacteria"/>
</dbReference>
<dbReference type="HOGENOM" id="CLU_035188_1_0_6"/>
<dbReference type="OrthoDB" id="9800696at2"/>
<dbReference type="Proteomes" id="UP000001867">
    <property type="component" value="Chromosome"/>
</dbReference>
<dbReference type="GO" id="GO:0005737">
    <property type="term" value="C:cytoplasm"/>
    <property type="evidence" value="ECO:0007669"/>
    <property type="project" value="UniProtKB-SubCell"/>
</dbReference>
<dbReference type="GO" id="GO:0005524">
    <property type="term" value="F:ATP binding"/>
    <property type="evidence" value="ECO:0007669"/>
    <property type="project" value="UniProtKB-KW"/>
</dbReference>
<dbReference type="GO" id="GO:0000049">
    <property type="term" value="F:tRNA binding"/>
    <property type="evidence" value="ECO:0007669"/>
    <property type="project" value="UniProtKB-KW"/>
</dbReference>
<dbReference type="GO" id="GO:0103016">
    <property type="term" value="F:tRNA-uridine 2-sulfurtransferase activity"/>
    <property type="evidence" value="ECO:0007669"/>
    <property type="project" value="UniProtKB-EC"/>
</dbReference>
<dbReference type="GO" id="GO:0002143">
    <property type="term" value="P:tRNA wobble position uridine thiolation"/>
    <property type="evidence" value="ECO:0007669"/>
    <property type="project" value="TreeGrafter"/>
</dbReference>
<dbReference type="CDD" id="cd01998">
    <property type="entry name" value="MnmA_TRMU-like"/>
    <property type="match status" value="1"/>
</dbReference>
<dbReference type="FunFam" id="2.30.30.280:FF:000001">
    <property type="entry name" value="tRNA-specific 2-thiouridylase MnmA"/>
    <property type="match status" value="1"/>
</dbReference>
<dbReference type="FunFam" id="2.40.30.10:FF:000023">
    <property type="entry name" value="tRNA-specific 2-thiouridylase MnmA"/>
    <property type="match status" value="1"/>
</dbReference>
<dbReference type="FunFam" id="3.40.50.620:FF:000004">
    <property type="entry name" value="tRNA-specific 2-thiouridylase MnmA"/>
    <property type="match status" value="1"/>
</dbReference>
<dbReference type="Gene3D" id="2.30.30.280">
    <property type="entry name" value="Adenine nucleotide alpha hydrolases-like domains"/>
    <property type="match status" value="1"/>
</dbReference>
<dbReference type="Gene3D" id="3.40.50.620">
    <property type="entry name" value="HUPs"/>
    <property type="match status" value="1"/>
</dbReference>
<dbReference type="Gene3D" id="2.40.30.10">
    <property type="entry name" value="Translation factors"/>
    <property type="match status" value="1"/>
</dbReference>
<dbReference type="HAMAP" id="MF_00144">
    <property type="entry name" value="tRNA_thiouridyl_MnmA"/>
    <property type="match status" value="1"/>
</dbReference>
<dbReference type="InterPro" id="IPR004506">
    <property type="entry name" value="MnmA-like"/>
</dbReference>
<dbReference type="InterPro" id="IPR046885">
    <property type="entry name" value="MnmA-like_C"/>
</dbReference>
<dbReference type="InterPro" id="IPR046884">
    <property type="entry name" value="MnmA-like_central"/>
</dbReference>
<dbReference type="InterPro" id="IPR023382">
    <property type="entry name" value="MnmA-like_central_sf"/>
</dbReference>
<dbReference type="InterPro" id="IPR014729">
    <property type="entry name" value="Rossmann-like_a/b/a_fold"/>
</dbReference>
<dbReference type="NCBIfam" id="NF001138">
    <property type="entry name" value="PRK00143.1"/>
    <property type="match status" value="1"/>
</dbReference>
<dbReference type="NCBIfam" id="TIGR00420">
    <property type="entry name" value="trmU"/>
    <property type="match status" value="1"/>
</dbReference>
<dbReference type="PANTHER" id="PTHR11933:SF5">
    <property type="entry name" value="MITOCHONDRIAL TRNA-SPECIFIC 2-THIOURIDYLASE 1"/>
    <property type="match status" value="1"/>
</dbReference>
<dbReference type="PANTHER" id="PTHR11933">
    <property type="entry name" value="TRNA 5-METHYLAMINOMETHYL-2-THIOURIDYLATE -METHYLTRANSFERASE"/>
    <property type="match status" value="1"/>
</dbReference>
<dbReference type="Pfam" id="PF03054">
    <property type="entry name" value="tRNA_Me_trans"/>
    <property type="match status" value="1"/>
</dbReference>
<dbReference type="Pfam" id="PF20258">
    <property type="entry name" value="tRNA_Me_trans_C"/>
    <property type="match status" value="1"/>
</dbReference>
<dbReference type="Pfam" id="PF20259">
    <property type="entry name" value="tRNA_Me_trans_M"/>
    <property type="match status" value="1"/>
</dbReference>
<dbReference type="SUPFAM" id="SSF52402">
    <property type="entry name" value="Adenine nucleotide alpha hydrolases-like"/>
    <property type="match status" value="1"/>
</dbReference>
<name>MNMA_STRM5</name>
<keyword id="KW-0067">ATP-binding</keyword>
<keyword id="KW-0963">Cytoplasm</keyword>
<keyword id="KW-1015">Disulfide bond</keyword>
<keyword id="KW-0547">Nucleotide-binding</keyword>
<keyword id="KW-0694">RNA-binding</keyword>
<keyword id="KW-0808">Transferase</keyword>
<keyword id="KW-0819">tRNA processing</keyword>
<keyword id="KW-0820">tRNA-binding</keyword>
<sequence length="380" mass="41960">MSTPRVMVGVSGGVDSSVAAWRLVQQGEAVAGLFMQNWADDGSGECRAEDDRRDAVAVCGLLGIPFHFRDFSNEYWQGVFEHFLAEYAAGRTPNPDVLCNREVKFKHFLDAARELGAERIATGHYARVAQRGHQWLLLRGADRSKDQSYFLHQLGQQQLAATLFPIGDLEKTDLRRIARDVSLPTHAKKDSTGICFIGERDFREFLGRYLPAKPGQILDPADGSVIAEHPGVFYFTLGQREGLNIGGVRGRPAAPWYVVGKDVASNVLYVDQDRDSTWMLSNRLRSETAHWIAGAPPARRFECTAQTRYRQPDEPCTVEVLDDGSVLVTFARPQRAVTPGQSLVLYDGDVCLGGAVIAATDAPLEQRLRTTPSPFEVIAA</sequence>
<feature type="chain" id="PRO_1000096305" description="tRNA-specific 2-thiouridylase MnmA">
    <location>
        <begin position="1"/>
        <end position="380"/>
    </location>
</feature>
<feature type="region of interest" description="Interaction with target base in tRNA" evidence="1">
    <location>
        <begin position="94"/>
        <end position="96"/>
    </location>
</feature>
<feature type="region of interest" description="Interaction with tRNA" evidence="1">
    <location>
        <begin position="145"/>
        <end position="147"/>
    </location>
</feature>
<feature type="region of interest" description="Interaction with tRNA" evidence="1">
    <location>
        <begin position="308"/>
        <end position="309"/>
    </location>
</feature>
<feature type="active site" description="Nucleophile" evidence="1">
    <location>
        <position position="99"/>
    </location>
</feature>
<feature type="active site" description="Cysteine persulfide intermediate" evidence="1">
    <location>
        <position position="195"/>
    </location>
</feature>
<feature type="binding site" evidence="1">
    <location>
        <begin position="9"/>
        <end position="16"/>
    </location>
    <ligand>
        <name>ATP</name>
        <dbReference type="ChEBI" id="CHEBI:30616"/>
    </ligand>
</feature>
<feature type="binding site" evidence="1">
    <location>
        <position position="35"/>
    </location>
    <ligand>
        <name>ATP</name>
        <dbReference type="ChEBI" id="CHEBI:30616"/>
    </ligand>
</feature>
<feature type="binding site" evidence="1">
    <location>
        <position position="123"/>
    </location>
    <ligand>
        <name>ATP</name>
        <dbReference type="ChEBI" id="CHEBI:30616"/>
    </ligand>
</feature>
<feature type="site" description="Interaction with tRNA" evidence="1">
    <location>
        <position position="124"/>
    </location>
</feature>
<feature type="site" description="Interaction with tRNA" evidence="1">
    <location>
        <position position="341"/>
    </location>
</feature>
<feature type="disulfide bond" description="Alternate" evidence="1">
    <location>
        <begin position="99"/>
        <end position="195"/>
    </location>
</feature>
<gene>
    <name evidence="1" type="primary">mnmA</name>
    <name type="ordered locus">Smal_1919</name>
</gene>
<proteinExistence type="inferred from homology"/>
<accession>B4SIN4</accession>
<organism>
    <name type="scientific">Stenotrophomonas maltophilia (strain R551-3)</name>
    <dbReference type="NCBI Taxonomy" id="391008"/>
    <lineage>
        <taxon>Bacteria</taxon>
        <taxon>Pseudomonadati</taxon>
        <taxon>Pseudomonadota</taxon>
        <taxon>Gammaproteobacteria</taxon>
        <taxon>Lysobacterales</taxon>
        <taxon>Lysobacteraceae</taxon>
        <taxon>Stenotrophomonas</taxon>
        <taxon>Stenotrophomonas maltophilia group</taxon>
    </lineage>
</organism>
<evidence type="ECO:0000255" key="1">
    <source>
        <dbReference type="HAMAP-Rule" id="MF_00144"/>
    </source>
</evidence>
<comment type="function">
    <text evidence="1">Catalyzes the 2-thiolation of uridine at the wobble position (U34) of tRNA, leading to the formation of s(2)U34.</text>
</comment>
<comment type="catalytic activity">
    <reaction evidence="1">
        <text>S-sulfanyl-L-cysteinyl-[protein] + uridine(34) in tRNA + AH2 + ATP = 2-thiouridine(34) in tRNA + L-cysteinyl-[protein] + A + AMP + diphosphate + H(+)</text>
        <dbReference type="Rhea" id="RHEA:47032"/>
        <dbReference type="Rhea" id="RHEA-COMP:10131"/>
        <dbReference type="Rhea" id="RHEA-COMP:11726"/>
        <dbReference type="Rhea" id="RHEA-COMP:11727"/>
        <dbReference type="Rhea" id="RHEA-COMP:11728"/>
        <dbReference type="ChEBI" id="CHEBI:13193"/>
        <dbReference type="ChEBI" id="CHEBI:15378"/>
        <dbReference type="ChEBI" id="CHEBI:17499"/>
        <dbReference type="ChEBI" id="CHEBI:29950"/>
        <dbReference type="ChEBI" id="CHEBI:30616"/>
        <dbReference type="ChEBI" id="CHEBI:33019"/>
        <dbReference type="ChEBI" id="CHEBI:61963"/>
        <dbReference type="ChEBI" id="CHEBI:65315"/>
        <dbReference type="ChEBI" id="CHEBI:87170"/>
        <dbReference type="ChEBI" id="CHEBI:456215"/>
        <dbReference type="EC" id="2.8.1.13"/>
    </reaction>
</comment>
<comment type="subcellular location">
    <subcellularLocation>
        <location evidence="1">Cytoplasm</location>
    </subcellularLocation>
</comment>
<comment type="similarity">
    <text evidence="1">Belongs to the MnmA/TRMU family.</text>
</comment>